<proteinExistence type="inferred from homology"/>
<feature type="chain" id="PRO_1000126552" description="Large ribosomal subunit protein bL31">
    <location>
        <begin position="1"/>
        <end position="70"/>
    </location>
</feature>
<feature type="binding site" evidence="1">
    <location>
        <position position="16"/>
    </location>
    <ligand>
        <name>Zn(2+)</name>
        <dbReference type="ChEBI" id="CHEBI:29105"/>
    </ligand>
</feature>
<feature type="binding site" evidence="1">
    <location>
        <position position="18"/>
    </location>
    <ligand>
        <name>Zn(2+)</name>
        <dbReference type="ChEBI" id="CHEBI:29105"/>
    </ligand>
</feature>
<feature type="binding site" evidence="1">
    <location>
        <position position="37"/>
    </location>
    <ligand>
        <name>Zn(2+)</name>
        <dbReference type="ChEBI" id="CHEBI:29105"/>
    </ligand>
</feature>
<feature type="binding site" evidence="1">
    <location>
        <position position="40"/>
    </location>
    <ligand>
        <name>Zn(2+)</name>
        <dbReference type="ChEBI" id="CHEBI:29105"/>
    </ligand>
</feature>
<accession>B3GXX5</accession>
<sequence length="70" mass="7791">MKQGIHPEYTEITATCSCGNVIKTRSTVGKNLNLDVCGNCHPFYTGKQRVVDTGGRVERFNKRFSIPSTK</sequence>
<name>RL31_ACTP7</name>
<comment type="function">
    <text evidence="1">Binds the 23S rRNA.</text>
</comment>
<comment type="cofactor">
    <cofactor evidence="1">
        <name>Zn(2+)</name>
        <dbReference type="ChEBI" id="CHEBI:29105"/>
    </cofactor>
    <text evidence="1">Binds 1 zinc ion per subunit.</text>
</comment>
<comment type="subunit">
    <text evidence="1">Part of the 50S ribosomal subunit.</text>
</comment>
<comment type="similarity">
    <text evidence="1">Belongs to the bacterial ribosomal protein bL31 family. Type A subfamily.</text>
</comment>
<reference key="1">
    <citation type="submission" date="2008-06" db="EMBL/GenBank/DDBJ databases">
        <title>Genome and proteome analysis of A. pleuropneumoniae serotype 7.</title>
        <authorList>
            <person name="Linke B."/>
            <person name="Buettner F."/>
            <person name="Martinez-Arias R."/>
            <person name="Goesmann A."/>
            <person name="Baltes N."/>
            <person name="Tegetmeyer H."/>
            <person name="Singh M."/>
            <person name="Gerlach G.F."/>
        </authorList>
    </citation>
    <scope>NUCLEOTIDE SEQUENCE [LARGE SCALE GENOMIC DNA]</scope>
    <source>
        <strain>AP76</strain>
    </source>
</reference>
<organism>
    <name type="scientific">Actinobacillus pleuropneumoniae serotype 7 (strain AP76)</name>
    <dbReference type="NCBI Taxonomy" id="537457"/>
    <lineage>
        <taxon>Bacteria</taxon>
        <taxon>Pseudomonadati</taxon>
        <taxon>Pseudomonadota</taxon>
        <taxon>Gammaproteobacteria</taxon>
        <taxon>Pasteurellales</taxon>
        <taxon>Pasteurellaceae</taxon>
        <taxon>Actinobacillus</taxon>
    </lineage>
</organism>
<evidence type="ECO:0000255" key="1">
    <source>
        <dbReference type="HAMAP-Rule" id="MF_00501"/>
    </source>
</evidence>
<evidence type="ECO:0000305" key="2"/>
<dbReference type="EMBL" id="CP001091">
    <property type="protein sequence ID" value="ACE61690.1"/>
    <property type="molecule type" value="Genomic_DNA"/>
</dbReference>
<dbReference type="RefSeq" id="WP_005597698.1">
    <property type="nucleotide sequence ID" value="NC_010939.1"/>
</dbReference>
<dbReference type="SMR" id="B3GXX5"/>
<dbReference type="GeneID" id="92744501"/>
<dbReference type="KEGG" id="apa:APP7_1038"/>
<dbReference type="HOGENOM" id="CLU_114306_4_3_6"/>
<dbReference type="Proteomes" id="UP000001226">
    <property type="component" value="Chromosome"/>
</dbReference>
<dbReference type="GO" id="GO:1990904">
    <property type="term" value="C:ribonucleoprotein complex"/>
    <property type="evidence" value="ECO:0007669"/>
    <property type="project" value="UniProtKB-KW"/>
</dbReference>
<dbReference type="GO" id="GO:0005840">
    <property type="term" value="C:ribosome"/>
    <property type="evidence" value="ECO:0007669"/>
    <property type="project" value="UniProtKB-KW"/>
</dbReference>
<dbReference type="GO" id="GO:0046872">
    <property type="term" value="F:metal ion binding"/>
    <property type="evidence" value="ECO:0007669"/>
    <property type="project" value="UniProtKB-KW"/>
</dbReference>
<dbReference type="GO" id="GO:0019843">
    <property type="term" value="F:rRNA binding"/>
    <property type="evidence" value="ECO:0007669"/>
    <property type="project" value="UniProtKB-KW"/>
</dbReference>
<dbReference type="GO" id="GO:0003735">
    <property type="term" value="F:structural constituent of ribosome"/>
    <property type="evidence" value="ECO:0007669"/>
    <property type="project" value="InterPro"/>
</dbReference>
<dbReference type="GO" id="GO:0006412">
    <property type="term" value="P:translation"/>
    <property type="evidence" value="ECO:0007669"/>
    <property type="project" value="UniProtKB-UniRule"/>
</dbReference>
<dbReference type="FunFam" id="4.10.830.30:FF:000001">
    <property type="entry name" value="50S ribosomal protein L31"/>
    <property type="match status" value="1"/>
</dbReference>
<dbReference type="Gene3D" id="4.10.830.30">
    <property type="entry name" value="Ribosomal protein L31"/>
    <property type="match status" value="1"/>
</dbReference>
<dbReference type="HAMAP" id="MF_00501">
    <property type="entry name" value="Ribosomal_bL31_1"/>
    <property type="match status" value="1"/>
</dbReference>
<dbReference type="InterPro" id="IPR034704">
    <property type="entry name" value="Ribosomal_bL28/bL31-like_sf"/>
</dbReference>
<dbReference type="InterPro" id="IPR002150">
    <property type="entry name" value="Ribosomal_bL31"/>
</dbReference>
<dbReference type="InterPro" id="IPR027491">
    <property type="entry name" value="Ribosomal_bL31_A"/>
</dbReference>
<dbReference type="InterPro" id="IPR042105">
    <property type="entry name" value="Ribosomal_bL31_sf"/>
</dbReference>
<dbReference type="NCBIfam" id="TIGR00105">
    <property type="entry name" value="L31"/>
    <property type="match status" value="1"/>
</dbReference>
<dbReference type="NCBIfam" id="NF000612">
    <property type="entry name" value="PRK00019.1"/>
    <property type="match status" value="1"/>
</dbReference>
<dbReference type="NCBIfam" id="NF001809">
    <property type="entry name" value="PRK00528.1"/>
    <property type="match status" value="1"/>
</dbReference>
<dbReference type="PANTHER" id="PTHR33280">
    <property type="entry name" value="50S RIBOSOMAL PROTEIN L31, CHLOROPLASTIC"/>
    <property type="match status" value="1"/>
</dbReference>
<dbReference type="PANTHER" id="PTHR33280:SF6">
    <property type="entry name" value="LARGE RIBOSOMAL SUBUNIT PROTEIN BL31A"/>
    <property type="match status" value="1"/>
</dbReference>
<dbReference type="Pfam" id="PF01197">
    <property type="entry name" value="Ribosomal_L31"/>
    <property type="match status" value="1"/>
</dbReference>
<dbReference type="PRINTS" id="PR01249">
    <property type="entry name" value="RIBOSOMALL31"/>
</dbReference>
<dbReference type="SUPFAM" id="SSF143800">
    <property type="entry name" value="L28p-like"/>
    <property type="match status" value="1"/>
</dbReference>
<dbReference type="PROSITE" id="PS01143">
    <property type="entry name" value="RIBOSOMAL_L31"/>
    <property type="match status" value="1"/>
</dbReference>
<gene>
    <name evidence="1" type="primary">rpmE</name>
    <name type="ordered locus">APP7_1038</name>
</gene>
<protein>
    <recommendedName>
        <fullName evidence="1">Large ribosomal subunit protein bL31</fullName>
    </recommendedName>
    <alternativeName>
        <fullName evidence="2">50S ribosomal protein L31</fullName>
    </alternativeName>
</protein>
<keyword id="KW-0479">Metal-binding</keyword>
<keyword id="KW-0687">Ribonucleoprotein</keyword>
<keyword id="KW-0689">Ribosomal protein</keyword>
<keyword id="KW-0694">RNA-binding</keyword>
<keyword id="KW-0699">rRNA-binding</keyword>
<keyword id="KW-0862">Zinc</keyword>